<protein>
    <recommendedName>
        <fullName evidence="1">DNA mismatch repair protein MutL</fullName>
    </recommendedName>
</protein>
<reference key="1">
    <citation type="journal article" date="2008" name="PLoS ONE">
        <title>Genome sequence of Brucella abortus vaccine strain S19 compared to virulent strains yields candidate virulence genes.</title>
        <authorList>
            <person name="Crasta O.R."/>
            <person name="Folkerts O."/>
            <person name="Fei Z."/>
            <person name="Mane S.P."/>
            <person name="Evans C."/>
            <person name="Martino-Catt S."/>
            <person name="Bricker B."/>
            <person name="Yu G."/>
            <person name="Du L."/>
            <person name="Sobral B.W."/>
        </authorList>
    </citation>
    <scope>NUCLEOTIDE SEQUENCE [LARGE SCALE GENOMIC DNA]</scope>
    <source>
        <strain>S19</strain>
    </source>
</reference>
<accession>B2SD15</accession>
<keyword id="KW-0227">DNA damage</keyword>
<keyword id="KW-0234">DNA repair</keyword>
<gene>
    <name evidence="1" type="primary">mutL</name>
    <name type="ordered locus">BAbS19_II02020</name>
</gene>
<feature type="chain" id="PRO_1000096632" description="DNA mismatch repair protein MutL">
    <location>
        <begin position="1"/>
        <end position="623"/>
    </location>
</feature>
<feature type="region of interest" description="Disordered" evidence="2">
    <location>
        <begin position="353"/>
        <end position="389"/>
    </location>
</feature>
<feature type="compositionally biased region" description="Polar residues" evidence="2">
    <location>
        <begin position="353"/>
        <end position="368"/>
    </location>
</feature>
<name>MUTL_BRUA1</name>
<comment type="function">
    <text evidence="1">This protein is involved in the repair of mismatches in DNA. It is required for dam-dependent methyl-directed DNA mismatch repair. May act as a 'molecular matchmaker', a protein that promotes the formation of a stable complex between two or more DNA-binding proteins in an ATP-dependent manner without itself being part of a final effector complex.</text>
</comment>
<comment type="similarity">
    <text evidence="1">Belongs to the DNA mismatch repair MutL/HexB family.</text>
</comment>
<organism>
    <name type="scientific">Brucella abortus (strain S19)</name>
    <dbReference type="NCBI Taxonomy" id="430066"/>
    <lineage>
        <taxon>Bacteria</taxon>
        <taxon>Pseudomonadati</taxon>
        <taxon>Pseudomonadota</taxon>
        <taxon>Alphaproteobacteria</taxon>
        <taxon>Hyphomicrobiales</taxon>
        <taxon>Brucellaceae</taxon>
        <taxon>Brucella/Ochrobactrum group</taxon>
        <taxon>Brucella</taxon>
    </lineage>
</organism>
<evidence type="ECO:0000255" key="1">
    <source>
        <dbReference type="HAMAP-Rule" id="MF_00149"/>
    </source>
</evidence>
<evidence type="ECO:0000256" key="2">
    <source>
        <dbReference type="SAM" id="MobiDB-lite"/>
    </source>
</evidence>
<dbReference type="EMBL" id="CP000888">
    <property type="protein sequence ID" value="ACD73719.1"/>
    <property type="molecule type" value="Genomic_DNA"/>
</dbReference>
<dbReference type="RefSeq" id="WP_002966364.1">
    <property type="nucleotide sequence ID" value="NC_010740.1"/>
</dbReference>
<dbReference type="SMR" id="B2SD15"/>
<dbReference type="GeneID" id="97535595"/>
<dbReference type="KEGG" id="bmc:BAbS19_II02020"/>
<dbReference type="HOGENOM" id="CLU_004131_4_2_5"/>
<dbReference type="Proteomes" id="UP000002565">
    <property type="component" value="Chromosome 2"/>
</dbReference>
<dbReference type="GO" id="GO:0032300">
    <property type="term" value="C:mismatch repair complex"/>
    <property type="evidence" value="ECO:0007669"/>
    <property type="project" value="InterPro"/>
</dbReference>
<dbReference type="GO" id="GO:0005524">
    <property type="term" value="F:ATP binding"/>
    <property type="evidence" value="ECO:0007669"/>
    <property type="project" value="InterPro"/>
</dbReference>
<dbReference type="GO" id="GO:0016887">
    <property type="term" value="F:ATP hydrolysis activity"/>
    <property type="evidence" value="ECO:0007669"/>
    <property type="project" value="InterPro"/>
</dbReference>
<dbReference type="GO" id="GO:0140664">
    <property type="term" value="F:ATP-dependent DNA damage sensor activity"/>
    <property type="evidence" value="ECO:0007669"/>
    <property type="project" value="InterPro"/>
</dbReference>
<dbReference type="GO" id="GO:0030983">
    <property type="term" value="F:mismatched DNA binding"/>
    <property type="evidence" value="ECO:0007669"/>
    <property type="project" value="InterPro"/>
</dbReference>
<dbReference type="GO" id="GO:0006298">
    <property type="term" value="P:mismatch repair"/>
    <property type="evidence" value="ECO:0007669"/>
    <property type="project" value="UniProtKB-UniRule"/>
</dbReference>
<dbReference type="CDD" id="cd16926">
    <property type="entry name" value="HATPase_MutL-MLH-PMS-like"/>
    <property type="match status" value="1"/>
</dbReference>
<dbReference type="CDD" id="cd00782">
    <property type="entry name" value="MutL_Trans"/>
    <property type="match status" value="1"/>
</dbReference>
<dbReference type="FunFam" id="3.30.565.10:FF:000003">
    <property type="entry name" value="DNA mismatch repair endonuclease MutL"/>
    <property type="match status" value="1"/>
</dbReference>
<dbReference type="Gene3D" id="3.30.230.10">
    <property type="match status" value="1"/>
</dbReference>
<dbReference type="Gene3D" id="3.30.565.10">
    <property type="entry name" value="Histidine kinase-like ATPase, C-terminal domain"/>
    <property type="match status" value="1"/>
</dbReference>
<dbReference type="Gene3D" id="3.30.1540.20">
    <property type="entry name" value="MutL, C-terminal domain, dimerisation subdomain"/>
    <property type="match status" value="1"/>
</dbReference>
<dbReference type="Gene3D" id="3.30.1370.100">
    <property type="entry name" value="MutL, C-terminal domain, regulatory subdomain"/>
    <property type="match status" value="1"/>
</dbReference>
<dbReference type="HAMAP" id="MF_00149">
    <property type="entry name" value="DNA_mis_repair"/>
    <property type="match status" value="1"/>
</dbReference>
<dbReference type="InterPro" id="IPR014762">
    <property type="entry name" value="DNA_mismatch_repair_CS"/>
</dbReference>
<dbReference type="InterPro" id="IPR020667">
    <property type="entry name" value="DNA_mismatch_repair_MutL"/>
</dbReference>
<dbReference type="InterPro" id="IPR013507">
    <property type="entry name" value="DNA_mismatch_S5_2-like"/>
</dbReference>
<dbReference type="InterPro" id="IPR036890">
    <property type="entry name" value="HATPase_C_sf"/>
</dbReference>
<dbReference type="InterPro" id="IPR002099">
    <property type="entry name" value="MutL/Mlh/PMS"/>
</dbReference>
<dbReference type="InterPro" id="IPR038973">
    <property type="entry name" value="MutL/Mlh/Pms-like"/>
</dbReference>
<dbReference type="InterPro" id="IPR014790">
    <property type="entry name" value="MutL_C"/>
</dbReference>
<dbReference type="InterPro" id="IPR042120">
    <property type="entry name" value="MutL_C_dimsub"/>
</dbReference>
<dbReference type="InterPro" id="IPR042121">
    <property type="entry name" value="MutL_C_regsub"/>
</dbReference>
<dbReference type="InterPro" id="IPR037198">
    <property type="entry name" value="MutL_C_sf"/>
</dbReference>
<dbReference type="InterPro" id="IPR020568">
    <property type="entry name" value="Ribosomal_Su5_D2-typ_SF"/>
</dbReference>
<dbReference type="InterPro" id="IPR014721">
    <property type="entry name" value="Ribsml_uS5_D2-typ_fold_subgr"/>
</dbReference>
<dbReference type="NCBIfam" id="TIGR00585">
    <property type="entry name" value="mutl"/>
    <property type="match status" value="1"/>
</dbReference>
<dbReference type="NCBIfam" id="NF000953">
    <property type="entry name" value="PRK00095.2-4"/>
    <property type="match status" value="1"/>
</dbReference>
<dbReference type="PANTHER" id="PTHR10073">
    <property type="entry name" value="DNA MISMATCH REPAIR PROTEIN MLH, PMS, MUTL"/>
    <property type="match status" value="1"/>
</dbReference>
<dbReference type="PANTHER" id="PTHR10073:SF12">
    <property type="entry name" value="DNA MISMATCH REPAIR PROTEIN MLH1"/>
    <property type="match status" value="1"/>
</dbReference>
<dbReference type="Pfam" id="PF01119">
    <property type="entry name" value="DNA_mis_repair"/>
    <property type="match status" value="1"/>
</dbReference>
<dbReference type="Pfam" id="PF13589">
    <property type="entry name" value="HATPase_c_3"/>
    <property type="match status" value="1"/>
</dbReference>
<dbReference type="Pfam" id="PF08676">
    <property type="entry name" value="MutL_C"/>
    <property type="match status" value="1"/>
</dbReference>
<dbReference type="SMART" id="SM01340">
    <property type="entry name" value="DNA_mis_repair"/>
    <property type="match status" value="1"/>
</dbReference>
<dbReference type="SMART" id="SM00853">
    <property type="entry name" value="MutL_C"/>
    <property type="match status" value="1"/>
</dbReference>
<dbReference type="SUPFAM" id="SSF55874">
    <property type="entry name" value="ATPase domain of HSP90 chaperone/DNA topoisomerase II/histidine kinase"/>
    <property type="match status" value="1"/>
</dbReference>
<dbReference type="SUPFAM" id="SSF118116">
    <property type="entry name" value="DNA mismatch repair protein MutL"/>
    <property type="match status" value="1"/>
</dbReference>
<dbReference type="SUPFAM" id="SSF54211">
    <property type="entry name" value="Ribosomal protein S5 domain 2-like"/>
    <property type="match status" value="1"/>
</dbReference>
<dbReference type="PROSITE" id="PS00058">
    <property type="entry name" value="DNA_MISMATCH_REPAIR_1"/>
    <property type="match status" value="1"/>
</dbReference>
<proteinExistence type="inferred from homology"/>
<sequence>MTIRHLSETIINQIAAGEVIERPASVIKELVENAIDAGATRIEVVTAGGGKTLLRVTDNGSGIPADELALAVSRHCTSKLTDDVHDIRALGFRGEALPSIGSVSKLTLKSRPQDADSGFEVCVTGGHLDGPRPTALNRGTIVEVRDLFYATPARLKFMKTDRAEATAITDVVKRIGIAFPHIRFSLAGTDRTPFEMPATGTGAEATLERIGQVLGREFGENALAIDAERDGVRLAGFVGIPSFNRGNALHQFAYVNGRPVRDKQIFGALRGAYSDVIARDRHPVAVLFLTLDPALVDVNVHPAKADVRFRDPGLVRGLIVGAIKQALAQSGIRPATSGAEAMLQAFRAEGFGAQQSAPRPANSYSPASWRTAPPAPRSEWSPQTAHPAHRPLDLQAAPALRENGQAVLGDVAVPAADARASVAEAPVELMQKPLGAARAQIHENYIVAQTEDSLVIVDQHAAHERLVYEALKNALHARPIAGQMLLIPEIVDLPEEDAQRLAGHAETLARFGLGVEQFGPGAIAVRETPAMLGEMNVQQLIRDLADEIAEHDTADGLKAMLHHVAATMACHGSVRSGRRLKPEEMNALLRDMEATPGSGTCNHGRPTYIELKLTDIERLFGRR</sequence>